<keyword id="KW-0325">Glycoprotein</keyword>
<keyword id="KW-0349">Heme</keyword>
<keyword id="KW-0408">Iron</keyword>
<keyword id="KW-0472">Membrane</keyword>
<keyword id="KW-0479">Metal-binding</keyword>
<keyword id="KW-0503">Monooxygenase</keyword>
<keyword id="KW-0560">Oxidoreductase</keyword>
<keyword id="KW-0735">Signal-anchor</keyword>
<keyword id="KW-0812">Transmembrane</keyword>
<keyword id="KW-1133">Transmembrane helix</keyword>
<accession>Q947B7</accession>
<accession>B0F4H0</accession>
<feature type="chain" id="PRO_0000398335" description="(+)-menthofuran synthase">
    <location>
        <begin position="1"/>
        <end position="493"/>
    </location>
</feature>
<feature type="topological domain" description="Cytoplasmic" evidence="2">
    <location>
        <position position="1"/>
    </location>
</feature>
<feature type="transmembrane region" description="Helical; Signal-anchor for type II membrane protein" evidence="2">
    <location>
        <begin position="2"/>
        <end position="19"/>
    </location>
</feature>
<feature type="topological domain" description="Lumenal" evidence="2">
    <location>
        <begin position="20"/>
        <end position="493"/>
    </location>
</feature>
<feature type="binding site" description="axial binding residue" evidence="1">
    <location>
        <position position="434"/>
    </location>
    <ligand>
        <name>heme</name>
        <dbReference type="ChEBI" id="CHEBI:30413"/>
    </ligand>
    <ligandPart>
        <name>Fe</name>
        <dbReference type="ChEBI" id="CHEBI:18248"/>
    </ligandPart>
</feature>
<feature type="glycosylation site" description="N-linked (GlcNAc...) asparagine" evidence="2">
    <location>
        <position position="169"/>
    </location>
</feature>
<feature type="sequence conflict" description="In Ref. 2; ABW86887." evidence="5" ref="2">
    <original>L</original>
    <variation>P</variation>
    <location>
        <position position="268"/>
    </location>
</feature>
<feature type="sequence conflict" description="In Ref. 2; ABW86887." evidence="5" ref="2">
    <original>K</original>
    <variation>R</variation>
    <location>
        <position position="342"/>
    </location>
</feature>
<feature type="sequence conflict" description="In Ref. 2; ABW86887." evidence="5" ref="2">
    <original>E</original>
    <variation>G</variation>
    <location>
        <position position="445"/>
    </location>
</feature>
<reference key="1">
    <citation type="journal article" date="2001" name="Arch. Biochem. Biophys.">
        <title>Demonstration that menthofuran synthase of mint (Mentha) is a cytochrome P450 monooxygenase: cloning, functional expression, and characterization of the responsible gene.</title>
        <authorList>
            <person name="Bertea C.M."/>
            <person name="Schalk M."/>
            <person name="Karp F."/>
            <person name="Maffei M."/>
            <person name="Croteau R."/>
        </authorList>
    </citation>
    <scope>NUCLEOTIDE SEQUENCE [MRNA]</scope>
    <scope>CATALYTIC ACTIVITY</scope>
    <source>
        <tissue>Peltate glandular trichome</tissue>
    </source>
</reference>
<reference key="2">
    <citation type="submission" date="2007-08" db="EMBL/GenBank/DDBJ databases">
        <title>Isolation of full-length genes of menthol biosynthesis pathway from Mentha x piperita cv. Madhuras.</title>
        <authorList>
            <person name="Gupta M.K."/>
            <person name="Gupta S."/>
            <person name="Shasany A.K."/>
            <person name="Khanuja S.P.S."/>
        </authorList>
    </citation>
    <scope>NUCLEOTIDE SEQUENCE [GENOMIC DNA / MRNA]</scope>
    <source>
        <strain>cv. Madhuras</strain>
    </source>
</reference>
<reference key="3">
    <citation type="journal article" date="2003" name="Proc. Natl. Acad. Sci. U.S.A.">
        <title>Menthofuran regulates essential oil biosynthesis in peppermint by controlling a downstream monoterpene reductase.</title>
        <authorList>
            <person name="Mahmoud S.S."/>
            <person name="Croteau R.B."/>
        </authorList>
    </citation>
    <scope>DISRUPTION PHENOTYPE</scope>
</reference>
<organism>
    <name type="scientific">Mentha piperita</name>
    <name type="common">Peppermint</name>
    <name type="synonym">Mentha aquatica x Mentha spicata</name>
    <dbReference type="NCBI Taxonomy" id="34256"/>
    <lineage>
        <taxon>Eukaryota</taxon>
        <taxon>Viridiplantae</taxon>
        <taxon>Streptophyta</taxon>
        <taxon>Embryophyta</taxon>
        <taxon>Tracheophyta</taxon>
        <taxon>Spermatophyta</taxon>
        <taxon>Magnoliopsida</taxon>
        <taxon>eudicotyledons</taxon>
        <taxon>Gunneridae</taxon>
        <taxon>Pentapetalae</taxon>
        <taxon>asterids</taxon>
        <taxon>lamiids</taxon>
        <taxon>Lamiales</taxon>
        <taxon>Lamiaceae</taxon>
        <taxon>Nepetoideae</taxon>
        <taxon>Mentheae</taxon>
        <taxon>Menthinae</taxon>
        <taxon>Mentha</taxon>
    </lineage>
</organism>
<dbReference type="EC" id="1.14.14.143" evidence="3"/>
<dbReference type="EMBL" id="AF346833">
    <property type="protein sequence ID" value="AAL06397.1"/>
    <property type="molecule type" value="mRNA"/>
</dbReference>
<dbReference type="EMBL" id="EU108704">
    <property type="protein sequence ID" value="ABW86888.1"/>
    <property type="molecule type" value="mRNA"/>
</dbReference>
<dbReference type="EMBL" id="EU108703">
    <property type="protein sequence ID" value="ABW86887.1"/>
    <property type="molecule type" value="Genomic_DNA"/>
</dbReference>
<dbReference type="SMR" id="Q947B7"/>
<dbReference type="KEGG" id="ag:AAL06397"/>
<dbReference type="BioCyc" id="MetaCyc:MONOMER-6783"/>
<dbReference type="BRENDA" id="1.14.13.104">
    <property type="organism ID" value="3222"/>
</dbReference>
<dbReference type="BRENDA" id="1.14.14.143">
    <property type="organism ID" value="3222"/>
</dbReference>
<dbReference type="UniPathway" id="UPA00213"/>
<dbReference type="GO" id="GO:0043231">
    <property type="term" value="C:intracellular membrane-bounded organelle"/>
    <property type="evidence" value="ECO:0000314"/>
    <property type="project" value="UniProtKB"/>
</dbReference>
<dbReference type="GO" id="GO:0016020">
    <property type="term" value="C:membrane"/>
    <property type="evidence" value="ECO:0007669"/>
    <property type="project" value="UniProtKB-SubCell"/>
</dbReference>
<dbReference type="GO" id="GO:0052582">
    <property type="term" value="F:(+)-menthofuran synthase activity"/>
    <property type="evidence" value="ECO:0000314"/>
    <property type="project" value="UniProtKB"/>
</dbReference>
<dbReference type="GO" id="GO:0020037">
    <property type="term" value="F:heme binding"/>
    <property type="evidence" value="ECO:0007669"/>
    <property type="project" value="InterPro"/>
</dbReference>
<dbReference type="GO" id="GO:0005506">
    <property type="term" value="F:iron ion binding"/>
    <property type="evidence" value="ECO:0007669"/>
    <property type="project" value="InterPro"/>
</dbReference>
<dbReference type="GO" id="GO:0016114">
    <property type="term" value="P:terpenoid biosynthetic process"/>
    <property type="evidence" value="ECO:0007669"/>
    <property type="project" value="UniProtKB-UniPathway"/>
</dbReference>
<dbReference type="GO" id="GO:0006721">
    <property type="term" value="P:terpenoid metabolic process"/>
    <property type="evidence" value="ECO:0000314"/>
    <property type="project" value="UniProtKB"/>
</dbReference>
<dbReference type="CDD" id="cd11072">
    <property type="entry name" value="CYP71-like"/>
    <property type="match status" value="1"/>
</dbReference>
<dbReference type="FunFam" id="1.10.630.10:FF:000011">
    <property type="entry name" value="Cytochrome P450 83B1"/>
    <property type="match status" value="1"/>
</dbReference>
<dbReference type="Gene3D" id="1.10.630.10">
    <property type="entry name" value="Cytochrome P450"/>
    <property type="match status" value="1"/>
</dbReference>
<dbReference type="InterPro" id="IPR001128">
    <property type="entry name" value="Cyt_P450"/>
</dbReference>
<dbReference type="InterPro" id="IPR017972">
    <property type="entry name" value="Cyt_P450_CS"/>
</dbReference>
<dbReference type="InterPro" id="IPR002401">
    <property type="entry name" value="Cyt_P450_E_grp-I"/>
</dbReference>
<dbReference type="InterPro" id="IPR036396">
    <property type="entry name" value="Cyt_P450_sf"/>
</dbReference>
<dbReference type="PANTHER" id="PTHR47955:SF15">
    <property type="entry name" value="CYTOCHROME P450 71A2-LIKE"/>
    <property type="match status" value="1"/>
</dbReference>
<dbReference type="PANTHER" id="PTHR47955">
    <property type="entry name" value="CYTOCHROME P450 FAMILY 71 PROTEIN"/>
    <property type="match status" value="1"/>
</dbReference>
<dbReference type="Pfam" id="PF00067">
    <property type="entry name" value="p450"/>
    <property type="match status" value="1"/>
</dbReference>
<dbReference type="PRINTS" id="PR00463">
    <property type="entry name" value="EP450I"/>
</dbReference>
<dbReference type="PRINTS" id="PR00385">
    <property type="entry name" value="P450"/>
</dbReference>
<dbReference type="SUPFAM" id="SSF48264">
    <property type="entry name" value="Cytochrome P450"/>
    <property type="match status" value="1"/>
</dbReference>
<dbReference type="PROSITE" id="PS00086">
    <property type="entry name" value="CYTOCHROME_P450"/>
    <property type="match status" value="1"/>
</dbReference>
<name>MFS_MENPI</name>
<comment type="function">
    <text>Monoterpene synthase that catalyzes the formation of (+)-menthofuran from (+)-pulegone.</text>
</comment>
<comment type="catalytic activity">
    <reaction evidence="3">
        <text>(R)-pulegone + reduced [NADPH--hemoprotein reductase] + O2 = (R)-menthofuran + oxidized [NADPH--hemoprotein reductase] + 2 H2O + H(+)</text>
        <dbReference type="Rhea" id="RHEA:25658"/>
        <dbReference type="Rhea" id="RHEA-COMP:11964"/>
        <dbReference type="Rhea" id="RHEA-COMP:11965"/>
        <dbReference type="ChEBI" id="CHEBI:6750"/>
        <dbReference type="ChEBI" id="CHEBI:15377"/>
        <dbReference type="ChEBI" id="CHEBI:15378"/>
        <dbReference type="ChEBI" id="CHEBI:15379"/>
        <dbReference type="ChEBI" id="CHEBI:35596"/>
        <dbReference type="ChEBI" id="CHEBI:57618"/>
        <dbReference type="ChEBI" id="CHEBI:58210"/>
        <dbReference type="EC" id="1.14.14.143"/>
    </reaction>
</comment>
<comment type="cofactor">
    <cofactor evidence="1">
        <name>heme</name>
        <dbReference type="ChEBI" id="CHEBI:30413"/>
    </cofactor>
</comment>
<comment type="pathway">
    <text>Secondary metabolite biosynthesis; terpenoid biosynthesis.</text>
</comment>
<comment type="subcellular location">
    <subcellularLocation>
        <location evidence="5">Membrane</location>
        <topology evidence="5">Single-pass type II membrane protein</topology>
    </subcellularLocation>
</comment>
<comment type="disruption phenotype">
    <text evidence="4">Co-suppression of menthofuran synthase leads to a decrease of pulegone level and an increase of piperitone and piperitenone levels due to an increased pulegone reductase activity.</text>
</comment>
<comment type="similarity">
    <text evidence="5">Belongs to the cytochrome P450 family.</text>
</comment>
<sequence length="493" mass="55360">MAALLVFFSVSLILLAVLFHKRKSSLSSRKRPPPSPLRLPVIGHFHLIGALSHRSFTSLSKRYGEVMLLHFGSAPVLVASSAAAAREIMKNQDVIFASRPRLSIFDRLMYSGKGVAFAPYGEHWRNARSMCMLQLLSAKRVQSFGGIREEETSAMIEKIRRSKPTTVVNLSEMFMALTNGVIHRAVLGRKGDGGDDFNRILIKVIKLLGSFNVGDYVPWLSWINRINGVDAEVEKVGTKLDGSMEGILRKYRRKKVGDDETNFVDTLLQFQRESKDTDPVEDDVIKALIFDMVSAGTDTTFAALEWTMAELIKNPRTLKTLQNEVREVSRNKGGITEDDVDKMPYLKAVSKEILRLHPPFAILLPRELTQDANMLGYDIPRGTVVLVNNWAISRDPSLWENPEEFRPERFLETSIDYKGLHFEMLPFGSGRRGCPGSTFAMALYELALSKLVNEFDFRLGNGDRAEDLDMTEAPGFVVHKKSPLLVLATPRQS</sequence>
<protein>
    <recommendedName>
        <fullName>(+)-menthofuran synthase</fullName>
        <ecNumber evidence="3">1.14.14.143</ecNumber>
    </recommendedName>
    <alternativeName>
        <fullName>(+)-pulegone 9-hydroxylase</fullName>
    </alternativeName>
</protein>
<evidence type="ECO:0000250" key="1"/>
<evidence type="ECO:0000255" key="2"/>
<evidence type="ECO:0000269" key="3">
    <source>
    </source>
</evidence>
<evidence type="ECO:0000269" key="4">
    <source>
    </source>
</evidence>
<evidence type="ECO:0000305" key="5"/>
<proteinExistence type="evidence at protein level"/>